<gene>
    <name evidence="1" type="primary">hldD</name>
    <name type="ordered locus">ECUMN_4136</name>
</gene>
<protein>
    <recommendedName>
        <fullName evidence="1">ADP-L-glycero-D-manno-heptose-6-epimerase</fullName>
        <ecNumber evidence="1">5.1.3.20</ecNumber>
    </recommendedName>
    <alternativeName>
        <fullName evidence="1">ADP-L-glycero-beta-D-manno-heptose-6-epimerase</fullName>
        <shortName evidence="1">ADP-glyceromanno-heptose 6-epimerase</shortName>
        <shortName evidence="1">ADP-hep 6-epimerase</shortName>
        <shortName evidence="1">AGME</shortName>
    </alternativeName>
</protein>
<comment type="function">
    <text evidence="1">Catalyzes the interconversion between ADP-D-glycero-beta-D-manno-heptose and ADP-L-glycero-beta-D-manno-heptose via an epimerization at carbon 6 of the heptose.</text>
</comment>
<comment type="catalytic activity">
    <reaction evidence="1">
        <text>ADP-D-glycero-beta-D-manno-heptose = ADP-L-glycero-beta-D-manno-heptose</text>
        <dbReference type="Rhea" id="RHEA:17577"/>
        <dbReference type="ChEBI" id="CHEBI:59967"/>
        <dbReference type="ChEBI" id="CHEBI:61506"/>
        <dbReference type="EC" id="5.1.3.20"/>
    </reaction>
</comment>
<comment type="cofactor">
    <cofactor evidence="1">
        <name>NADP(+)</name>
        <dbReference type="ChEBI" id="CHEBI:58349"/>
    </cofactor>
    <text evidence="1">Binds 1 NADP(+) per subunit.</text>
</comment>
<comment type="pathway">
    <text evidence="1">Nucleotide-sugar biosynthesis; ADP-L-glycero-beta-D-manno-heptose biosynthesis; ADP-L-glycero-beta-D-manno-heptose from D-glycero-beta-D-manno-heptose 7-phosphate: step 4/4.</text>
</comment>
<comment type="subunit">
    <text evidence="1">Homopentamer.</text>
</comment>
<comment type="domain">
    <text evidence="1">Contains a large N-terminal NADP-binding domain, and a smaller C-terminal substrate-binding domain.</text>
</comment>
<comment type="similarity">
    <text evidence="1">Belongs to the NAD(P)-dependent epimerase/dehydratase family. HldD subfamily.</text>
</comment>
<evidence type="ECO:0000255" key="1">
    <source>
        <dbReference type="HAMAP-Rule" id="MF_01601"/>
    </source>
</evidence>
<reference key="1">
    <citation type="journal article" date="2009" name="PLoS Genet.">
        <title>Organised genome dynamics in the Escherichia coli species results in highly diverse adaptive paths.</title>
        <authorList>
            <person name="Touchon M."/>
            <person name="Hoede C."/>
            <person name="Tenaillon O."/>
            <person name="Barbe V."/>
            <person name="Baeriswyl S."/>
            <person name="Bidet P."/>
            <person name="Bingen E."/>
            <person name="Bonacorsi S."/>
            <person name="Bouchier C."/>
            <person name="Bouvet O."/>
            <person name="Calteau A."/>
            <person name="Chiapello H."/>
            <person name="Clermont O."/>
            <person name="Cruveiller S."/>
            <person name="Danchin A."/>
            <person name="Diard M."/>
            <person name="Dossat C."/>
            <person name="Karoui M.E."/>
            <person name="Frapy E."/>
            <person name="Garry L."/>
            <person name="Ghigo J.M."/>
            <person name="Gilles A.M."/>
            <person name="Johnson J."/>
            <person name="Le Bouguenec C."/>
            <person name="Lescat M."/>
            <person name="Mangenot S."/>
            <person name="Martinez-Jehanne V."/>
            <person name="Matic I."/>
            <person name="Nassif X."/>
            <person name="Oztas S."/>
            <person name="Petit M.A."/>
            <person name="Pichon C."/>
            <person name="Rouy Z."/>
            <person name="Ruf C.S."/>
            <person name="Schneider D."/>
            <person name="Tourret J."/>
            <person name="Vacherie B."/>
            <person name="Vallenet D."/>
            <person name="Medigue C."/>
            <person name="Rocha E.P.C."/>
            <person name="Denamur E."/>
        </authorList>
    </citation>
    <scope>NUCLEOTIDE SEQUENCE [LARGE SCALE GENOMIC DNA]</scope>
    <source>
        <strain>UMN026 / ExPEC</strain>
    </source>
</reference>
<proteinExistence type="inferred from homology"/>
<accession>B7NES6</accession>
<feature type="chain" id="PRO_1000148078" description="ADP-L-glycero-D-manno-heptose-6-epimerase">
    <location>
        <begin position="1"/>
        <end position="310"/>
    </location>
</feature>
<feature type="active site" description="Proton acceptor" evidence="1">
    <location>
        <position position="140"/>
    </location>
</feature>
<feature type="active site" description="Proton acceptor" evidence="1">
    <location>
        <position position="178"/>
    </location>
</feature>
<feature type="binding site" evidence="1">
    <location>
        <begin position="10"/>
        <end position="11"/>
    </location>
    <ligand>
        <name>NADP(+)</name>
        <dbReference type="ChEBI" id="CHEBI:58349"/>
    </ligand>
</feature>
<feature type="binding site" evidence="1">
    <location>
        <begin position="31"/>
        <end position="32"/>
    </location>
    <ligand>
        <name>NADP(+)</name>
        <dbReference type="ChEBI" id="CHEBI:58349"/>
    </ligand>
</feature>
<feature type="binding site" evidence="1">
    <location>
        <position position="38"/>
    </location>
    <ligand>
        <name>NADP(+)</name>
        <dbReference type="ChEBI" id="CHEBI:58349"/>
    </ligand>
</feature>
<feature type="binding site" evidence="1">
    <location>
        <position position="53"/>
    </location>
    <ligand>
        <name>NADP(+)</name>
        <dbReference type="ChEBI" id="CHEBI:58349"/>
    </ligand>
</feature>
<feature type="binding site" evidence="1">
    <location>
        <begin position="75"/>
        <end position="79"/>
    </location>
    <ligand>
        <name>NADP(+)</name>
        <dbReference type="ChEBI" id="CHEBI:58349"/>
    </ligand>
</feature>
<feature type="binding site" evidence="1">
    <location>
        <position position="92"/>
    </location>
    <ligand>
        <name>NADP(+)</name>
        <dbReference type="ChEBI" id="CHEBI:58349"/>
    </ligand>
</feature>
<feature type="binding site" evidence="1">
    <location>
        <position position="144"/>
    </location>
    <ligand>
        <name>NADP(+)</name>
        <dbReference type="ChEBI" id="CHEBI:58349"/>
    </ligand>
</feature>
<feature type="binding site" evidence="1">
    <location>
        <position position="169"/>
    </location>
    <ligand>
        <name>substrate</name>
    </ligand>
</feature>
<feature type="binding site" evidence="1">
    <location>
        <position position="170"/>
    </location>
    <ligand>
        <name>NADP(+)</name>
        <dbReference type="ChEBI" id="CHEBI:58349"/>
    </ligand>
</feature>
<feature type="binding site" evidence="1">
    <location>
        <position position="178"/>
    </location>
    <ligand>
        <name>NADP(+)</name>
        <dbReference type="ChEBI" id="CHEBI:58349"/>
    </ligand>
</feature>
<feature type="binding site" evidence="1">
    <location>
        <position position="180"/>
    </location>
    <ligand>
        <name>substrate</name>
    </ligand>
</feature>
<feature type="binding site" evidence="1">
    <location>
        <position position="187"/>
    </location>
    <ligand>
        <name>substrate</name>
    </ligand>
</feature>
<feature type="binding site" evidence="1">
    <location>
        <begin position="201"/>
        <end position="204"/>
    </location>
    <ligand>
        <name>substrate</name>
    </ligand>
</feature>
<feature type="binding site" evidence="1">
    <location>
        <position position="209"/>
    </location>
    <ligand>
        <name>substrate</name>
    </ligand>
</feature>
<feature type="binding site" evidence="1">
    <location>
        <position position="272"/>
    </location>
    <ligand>
        <name>substrate</name>
    </ligand>
</feature>
<feature type="modified residue" description="N6-acetyllysine" evidence="1">
    <location>
        <position position="267"/>
    </location>
</feature>
<dbReference type="EC" id="5.1.3.20" evidence="1"/>
<dbReference type="EMBL" id="CU928163">
    <property type="protein sequence ID" value="CAR15277.1"/>
    <property type="molecule type" value="Genomic_DNA"/>
</dbReference>
<dbReference type="RefSeq" id="YP_002414775.1">
    <property type="nucleotide sequence ID" value="NC_011751.1"/>
</dbReference>
<dbReference type="SMR" id="B7NES6"/>
<dbReference type="STRING" id="585056.ECUMN_4136"/>
<dbReference type="KEGG" id="eum:ECUMN_4136"/>
<dbReference type="PATRIC" id="fig|585056.7.peg.4311"/>
<dbReference type="HOGENOM" id="CLU_007383_1_3_6"/>
<dbReference type="UniPathway" id="UPA00356">
    <property type="reaction ID" value="UER00440"/>
</dbReference>
<dbReference type="Proteomes" id="UP000007097">
    <property type="component" value="Chromosome"/>
</dbReference>
<dbReference type="GO" id="GO:0008712">
    <property type="term" value="F:ADP-glyceromanno-heptose 6-epimerase activity"/>
    <property type="evidence" value="ECO:0007669"/>
    <property type="project" value="UniProtKB-UniRule"/>
</dbReference>
<dbReference type="GO" id="GO:0050661">
    <property type="term" value="F:NADP binding"/>
    <property type="evidence" value="ECO:0007669"/>
    <property type="project" value="InterPro"/>
</dbReference>
<dbReference type="GO" id="GO:0097171">
    <property type="term" value="P:ADP-L-glycero-beta-D-manno-heptose biosynthetic process"/>
    <property type="evidence" value="ECO:0007669"/>
    <property type="project" value="UniProtKB-UniPathway"/>
</dbReference>
<dbReference type="GO" id="GO:0005975">
    <property type="term" value="P:carbohydrate metabolic process"/>
    <property type="evidence" value="ECO:0007669"/>
    <property type="project" value="UniProtKB-UniRule"/>
</dbReference>
<dbReference type="CDD" id="cd05248">
    <property type="entry name" value="ADP_GME_SDR_e"/>
    <property type="match status" value="1"/>
</dbReference>
<dbReference type="Gene3D" id="3.40.50.720">
    <property type="entry name" value="NAD(P)-binding Rossmann-like Domain"/>
    <property type="match status" value="1"/>
</dbReference>
<dbReference type="Gene3D" id="3.90.25.10">
    <property type="entry name" value="UDP-galactose 4-epimerase, domain 1"/>
    <property type="match status" value="1"/>
</dbReference>
<dbReference type="HAMAP" id="MF_01601">
    <property type="entry name" value="Heptose_epimerase"/>
    <property type="match status" value="1"/>
</dbReference>
<dbReference type="InterPro" id="IPR001509">
    <property type="entry name" value="Epimerase_deHydtase"/>
</dbReference>
<dbReference type="InterPro" id="IPR011912">
    <property type="entry name" value="Heptose_epim"/>
</dbReference>
<dbReference type="InterPro" id="IPR036291">
    <property type="entry name" value="NAD(P)-bd_dom_sf"/>
</dbReference>
<dbReference type="NCBIfam" id="TIGR02197">
    <property type="entry name" value="heptose_epim"/>
    <property type="match status" value="1"/>
</dbReference>
<dbReference type="NCBIfam" id="NF008360">
    <property type="entry name" value="PRK11150.1"/>
    <property type="match status" value="1"/>
</dbReference>
<dbReference type="PANTHER" id="PTHR43103:SF3">
    <property type="entry name" value="ADP-L-GLYCERO-D-MANNO-HEPTOSE-6-EPIMERASE"/>
    <property type="match status" value="1"/>
</dbReference>
<dbReference type="PANTHER" id="PTHR43103">
    <property type="entry name" value="NUCLEOSIDE-DIPHOSPHATE-SUGAR EPIMERASE"/>
    <property type="match status" value="1"/>
</dbReference>
<dbReference type="Pfam" id="PF01370">
    <property type="entry name" value="Epimerase"/>
    <property type="match status" value="1"/>
</dbReference>
<dbReference type="SUPFAM" id="SSF51735">
    <property type="entry name" value="NAD(P)-binding Rossmann-fold domains"/>
    <property type="match status" value="1"/>
</dbReference>
<keyword id="KW-0007">Acetylation</keyword>
<keyword id="KW-0119">Carbohydrate metabolism</keyword>
<keyword id="KW-0413">Isomerase</keyword>
<keyword id="KW-0521">NADP</keyword>
<sequence>MIIVTGGAGFIGSNIVKALNDKGITDILVVDNLKDGTKFVNLVDLDIADYMDKEDFLIQIMAGEEFGDVEAIFHEGACSSTTEWDGKYMMDNNYQYSKELLHYCLEREIPFLYASSAATYGGRTSDFIESREYEKPLNVYGYSKFLFDEYVRQILPEANSQIVGFRYFNVYGPREGHKGSMASVAFHLNTQLNNGESPKLFEGSENFKRDFVYVGDVADVNLWFLENGVSGIFNLGTGRAESFQAVADATLAYHKKGQIEYIPFPDKLKGRYQAFTQADLTNLRAAGYDKPFKTVAEGVTEYMAWLNRDA</sequence>
<organism>
    <name type="scientific">Escherichia coli O17:K52:H18 (strain UMN026 / ExPEC)</name>
    <dbReference type="NCBI Taxonomy" id="585056"/>
    <lineage>
        <taxon>Bacteria</taxon>
        <taxon>Pseudomonadati</taxon>
        <taxon>Pseudomonadota</taxon>
        <taxon>Gammaproteobacteria</taxon>
        <taxon>Enterobacterales</taxon>
        <taxon>Enterobacteriaceae</taxon>
        <taxon>Escherichia</taxon>
    </lineage>
</organism>
<name>HLDD_ECOLU</name>